<name>TRI5_GIBZE</name>
<dbReference type="EC" id="4.2.3.6"/>
<dbReference type="EMBL" id="U22464">
    <property type="protein sequence ID" value="AAB72033.1"/>
    <property type="molecule type" value="Genomic_DNA"/>
</dbReference>
<dbReference type="EMBL" id="AF336366">
    <property type="protein sequence ID" value="AAK53586.1"/>
    <property type="molecule type" value="Genomic_DNA"/>
</dbReference>
<dbReference type="EMBL" id="AY102567">
    <property type="protein sequence ID" value="AAM48750.1"/>
    <property type="molecule type" value="Genomic_DNA"/>
</dbReference>
<dbReference type="EMBL" id="AY102581">
    <property type="protein sequence ID" value="AAM48862.1"/>
    <property type="molecule type" value="Genomic_DNA"/>
</dbReference>
<dbReference type="EMBL" id="AY102584">
    <property type="protein sequence ID" value="AAM48886.1"/>
    <property type="molecule type" value="Genomic_DNA"/>
</dbReference>
<dbReference type="EMBL" id="AY102587">
    <property type="protein sequence ID" value="AAM48910.1"/>
    <property type="molecule type" value="Genomic_DNA"/>
</dbReference>
<dbReference type="EMBL" id="AY102599">
    <property type="protein sequence ID" value="AAM49006.1"/>
    <property type="molecule type" value="Genomic_DNA"/>
</dbReference>
<dbReference type="EMBL" id="AY102603">
    <property type="protein sequence ID" value="AAM49038.1"/>
    <property type="molecule type" value="Genomic_DNA"/>
</dbReference>
<dbReference type="EMBL" id="AY102605">
    <property type="protein sequence ID" value="AAM49054.1"/>
    <property type="molecule type" value="Genomic_DNA"/>
</dbReference>
<dbReference type="EMBL" id="AF359361">
    <property type="protein sequence ID" value="AAK33084.1"/>
    <property type="molecule type" value="Genomic_DNA"/>
</dbReference>
<dbReference type="EMBL" id="AY130290">
    <property type="protein sequence ID" value="AAN05032.1"/>
    <property type="molecule type" value="Genomic_DNA"/>
</dbReference>
<dbReference type="EMBL" id="DS231664">
    <property type="protein sequence ID" value="ESU09673.1"/>
    <property type="molecule type" value="Genomic_DNA"/>
</dbReference>
<dbReference type="EMBL" id="HG970333">
    <property type="protein sequence ID" value="CEF78359.1"/>
    <property type="molecule type" value="Genomic_DNA"/>
</dbReference>
<dbReference type="RefSeq" id="XP_011322172.1">
    <property type="nucleotide sequence ID" value="XM_011323870.1"/>
</dbReference>
<dbReference type="SMR" id="Q00909"/>
<dbReference type="STRING" id="229533.Q00909"/>
<dbReference type="GeneID" id="23550840"/>
<dbReference type="KEGG" id="fgr:FGSG_03537"/>
<dbReference type="VEuPathDB" id="FungiDB:FGRAMPH1_01G13111"/>
<dbReference type="eggNOG" id="ENOG502SQ3X">
    <property type="taxonomic scope" value="Eukaryota"/>
</dbReference>
<dbReference type="HOGENOM" id="CLU_733855_0_0_1"/>
<dbReference type="InParanoid" id="Q00909"/>
<dbReference type="OrthoDB" id="9685at110618"/>
<dbReference type="BRENDA" id="4.2.3.6">
    <property type="organism ID" value="2428"/>
</dbReference>
<dbReference type="UniPathway" id="UPA00267"/>
<dbReference type="PHI-base" id="PHI:3518"/>
<dbReference type="PHI-base" id="PHI:4243"/>
<dbReference type="PHI-base" id="PHI:6797"/>
<dbReference type="PHI-base" id="PHI:8390"/>
<dbReference type="Proteomes" id="UP000070720">
    <property type="component" value="Chromosome 2"/>
</dbReference>
<dbReference type="GO" id="GO:0045482">
    <property type="term" value="F:trichodiene synthase activity"/>
    <property type="evidence" value="ECO:0000315"/>
    <property type="project" value="PHI-base"/>
</dbReference>
<dbReference type="GO" id="GO:0016106">
    <property type="term" value="P:sesquiterpenoid biosynthetic process"/>
    <property type="evidence" value="ECO:0007669"/>
    <property type="project" value="InterPro"/>
</dbReference>
<dbReference type="Gene3D" id="1.10.600.10">
    <property type="entry name" value="Farnesyl Diphosphate Synthase"/>
    <property type="match status" value="1"/>
</dbReference>
<dbReference type="InterPro" id="IPR008949">
    <property type="entry name" value="Isoprenoid_synthase_dom_sf"/>
</dbReference>
<dbReference type="InterPro" id="IPR010458">
    <property type="entry name" value="TRI5_ascomyc"/>
</dbReference>
<dbReference type="InterPro" id="IPR024652">
    <property type="entry name" value="Trichodiene_synth"/>
</dbReference>
<dbReference type="Pfam" id="PF06330">
    <property type="entry name" value="TRI5"/>
    <property type="match status" value="1"/>
</dbReference>
<dbReference type="PIRSF" id="PIRSF001388">
    <property type="entry name" value="TRI5"/>
    <property type="match status" value="1"/>
</dbReference>
<dbReference type="SFLD" id="SFLDS00005">
    <property type="entry name" value="Isoprenoid_Synthase_Type_I"/>
    <property type="match status" value="1"/>
</dbReference>
<dbReference type="SFLD" id="SFLDG01021">
    <property type="entry name" value="Trichodiene_Synthase_Like"/>
    <property type="match status" value="1"/>
</dbReference>
<dbReference type="SUPFAM" id="SSF48576">
    <property type="entry name" value="Terpenoid synthases"/>
    <property type="match status" value="1"/>
</dbReference>
<organism>
    <name type="scientific">Gibberella zeae (strain ATCC MYA-4620 / CBS 123657 / FGSC 9075 / NRRL 31084 / PH-1)</name>
    <name type="common">Wheat head blight fungus</name>
    <name type="synonym">Fusarium graminearum</name>
    <dbReference type="NCBI Taxonomy" id="229533"/>
    <lineage>
        <taxon>Eukaryota</taxon>
        <taxon>Fungi</taxon>
        <taxon>Dikarya</taxon>
        <taxon>Ascomycota</taxon>
        <taxon>Pezizomycotina</taxon>
        <taxon>Sordariomycetes</taxon>
        <taxon>Hypocreomycetidae</taxon>
        <taxon>Hypocreales</taxon>
        <taxon>Nectriaceae</taxon>
        <taxon>Fusarium</taxon>
    </lineage>
</organism>
<evidence type="ECO:0000305" key="1"/>
<gene>
    <name type="primary">TRI5</name>
    <name type="ORF">FGRRES_03537</name>
    <name type="ORF">FGSG_03537</name>
</gene>
<keyword id="KW-0456">Lyase</keyword>
<keyword id="KW-1185">Reference proteome</keyword>
<protein>
    <recommendedName>
        <fullName>Trichodiene synthase</fullName>
        <ecNumber>4.2.3.6</ecNumber>
    </recommendedName>
    <alternativeName>
        <fullName>Sesquiterpene cyclase</fullName>
        <shortName>TS</shortName>
    </alternativeName>
</protein>
<sequence>MENFPTEYFLNTSVRLLEYIRYRDSNYTREERIENLHYAYNKAAHHFAQPRQQQMLKVDPKRLQASLQTIVGMVVYSWAKVSKECMADLSIHYTYTLVLDDSSDDPHPAMLNYFDDLQAGREQAHPWWALVNEHFPNVLRHFGPFCSLNLIRSTMDFFEGCWIEQYNFGGFPGSDDYPQFLRRMNGLGHCVGASLWPKDLFDERKHFLEITSAVAQMENWMVWVNDLMSFYKEFDDERDQISLVKNFVTCHEITLDEALEKLTQETLHSSKQMVAVFSDKDPQVMDTIECFMHGYVTWHLCDARYRLHEIYEKVKDQDTEDAKKFCKFFEQAANVGAVAPSEWAYPQVAQLANVRAKDDVKEAQKPILSSIELVE</sequence>
<comment type="function">
    <text>TS is a member of the terpene cyclase group of enzymes. It catalyzes the isomerization and cyclization of farnesyl pyro-phosphate to form trichodiene, the first cyclic intermediate in the biosynthetic pathway for trichothecenes. It serves to branch trichothecene biosynthesis from the isoprenoid pathway.</text>
</comment>
<comment type="catalytic activity">
    <reaction>
        <text>(2E,6E)-farnesyl diphosphate = trichodiene + diphosphate</text>
        <dbReference type="Rhea" id="RHEA:12052"/>
        <dbReference type="ChEBI" id="CHEBI:15861"/>
        <dbReference type="ChEBI" id="CHEBI:33019"/>
        <dbReference type="ChEBI" id="CHEBI:175763"/>
        <dbReference type="EC" id="4.2.3.6"/>
    </reaction>
</comment>
<comment type="pathway">
    <text>Sesquiterpene biosynthesis; trichothecene biosynthesis.</text>
</comment>
<comment type="miscellaneous">
    <text>Trichothecenes are sesquiterpenoid toxins that act by inhibiting protein biosynthesis.</text>
</comment>
<comment type="similarity">
    <text evidence="1">Belongs to the trichodiene synthase family.</text>
</comment>
<accession>Q00909</accession>
<accession>A0A0E0S4D4</accession>
<accession>Q4IGX1</accession>
<accession>Q7LJN7</accession>
<accession>Q7LP63</accession>
<accession>Q7Z8C3</accession>
<accession>Q8NII2</accession>
<accession>Q8NJ97</accession>
<accession>V6R4Z7</accession>
<proteinExistence type="inferred from homology"/>
<reference key="1">
    <citation type="journal article" date="1995" name="Mol. Plant Microbe Interact.">
        <title>Reduced virulence of Gibberella zeae caused by disruption of a trichothecene toxin biosynthetic gene.</title>
        <authorList>
            <person name="Proctor R.H."/>
            <person name="Hohn T.M."/>
            <person name="McCormick S.P."/>
        </authorList>
    </citation>
    <scope>NUCLEOTIDE SEQUENCE [GENOMIC DNA]</scope>
    <source>
        <strain>W-8</strain>
    </source>
</reference>
<reference key="2">
    <citation type="journal article" date="2001" name="Appl. Environ. Microbiol.">
        <title>Identification of deoxynivalenol- and nivalenol-producing chemotypes of Gibberella zeae by using PCR.</title>
        <authorList>
            <person name="Lee T."/>
            <person name="Oh D.W."/>
            <person name="Kim H.-S."/>
            <person name="Lee J.-K."/>
            <person name="Kim Y.-H."/>
            <person name="Yun S.-H."/>
            <person name="Lee Y.-W."/>
        </authorList>
    </citation>
    <scope>NUCLEOTIDE SEQUENCE [GENOMIC DNA]</scope>
    <source>
        <strain>H-11</strain>
    </source>
</reference>
<reference key="3">
    <citation type="journal article" date="2002" name="Proc. Natl. Acad. Sci. U.S.A.">
        <title>Ancestral polymorphism and adaptive evolution in the trichothecene mycotoxin gene cluster of phytopathogenic Fusarium.</title>
        <authorList>
            <person name="Ward T.J."/>
            <person name="Bielawski J.P."/>
            <person name="Kistler H.C."/>
            <person name="Sullivan E."/>
            <person name="O'Donnell K."/>
        </authorList>
    </citation>
    <scope>NUCLEOTIDE SEQUENCE [GENOMIC DNA]</scope>
    <source>
        <strain>NRRL 13383</strain>
        <strain>NRRL 28063</strain>
        <strain>NRRL 28336</strain>
        <strain>NRRL 28439</strain>
        <strain>NRRL 29169</strain>
        <strain>NRRL 5883</strain>
        <strain>NRRL 6394</strain>
    </source>
</reference>
<reference key="4">
    <citation type="submission" date="2002-07" db="EMBL/GenBank/DDBJ databases">
        <title>Trichodiene synthase (Tri5) targeted PCR for identification of Fusarium culmorum, F. graminearum, F. poae and F. sporotrichioides.</title>
        <authorList>
            <person name="Eriksson A.R.B."/>
            <person name="Schnurer J."/>
        </authorList>
    </citation>
    <scope>NUCLEOTIDE SEQUENCE [GENOMIC DNA]</scope>
    <source>
        <strain>IBT1958</strain>
    </source>
</reference>
<reference key="5">
    <citation type="submission" date="2003-02" db="EMBL/GenBank/DDBJ databases">
        <authorList>
            <person name="Brown D.W."/>
            <person name="Dyer R.B."/>
            <person name="Kendra D.F."/>
            <person name="Plattner R.H."/>
        </authorList>
    </citation>
    <scope>NUCLEOTIDE SEQUENCE [GENOMIC DNA]</scope>
    <source>
        <strain>GZ3639</strain>
    </source>
</reference>
<reference key="6">
    <citation type="journal article" date="2007" name="Science">
        <title>The Fusarium graminearum genome reveals a link between localized polymorphism and pathogen specialization.</title>
        <authorList>
            <person name="Cuomo C.A."/>
            <person name="Gueldener U."/>
            <person name="Xu J.-R."/>
            <person name="Trail F."/>
            <person name="Turgeon B.G."/>
            <person name="Di Pietro A."/>
            <person name="Walton J.D."/>
            <person name="Ma L.-J."/>
            <person name="Baker S.E."/>
            <person name="Rep M."/>
            <person name="Adam G."/>
            <person name="Antoniw J."/>
            <person name="Baldwin T."/>
            <person name="Calvo S.E."/>
            <person name="Chang Y.-L."/>
            <person name="DeCaprio D."/>
            <person name="Gale L.R."/>
            <person name="Gnerre S."/>
            <person name="Goswami R.S."/>
            <person name="Hammond-Kosack K."/>
            <person name="Harris L.J."/>
            <person name="Hilburn K."/>
            <person name="Kennell J.C."/>
            <person name="Kroken S."/>
            <person name="Magnuson J.K."/>
            <person name="Mannhaupt G."/>
            <person name="Mauceli E.W."/>
            <person name="Mewes H.-W."/>
            <person name="Mitterbauer R."/>
            <person name="Muehlbauer G."/>
            <person name="Muensterkoetter M."/>
            <person name="Nelson D."/>
            <person name="O'Donnell K."/>
            <person name="Ouellet T."/>
            <person name="Qi W."/>
            <person name="Quesneville H."/>
            <person name="Roncero M.I.G."/>
            <person name="Seong K.-Y."/>
            <person name="Tetko I.V."/>
            <person name="Urban M."/>
            <person name="Waalwijk C."/>
            <person name="Ward T.J."/>
            <person name="Yao J."/>
            <person name="Birren B.W."/>
            <person name="Kistler H.C."/>
        </authorList>
    </citation>
    <scope>NUCLEOTIDE SEQUENCE [LARGE SCALE GENOMIC DNA]</scope>
    <source>
        <strain>ATCC MYA-4620 / CBS 123657 / FGSC 9075 / NRRL 31084 / PH-1</strain>
    </source>
</reference>
<reference key="7">
    <citation type="journal article" date="2010" name="Nature">
        <title>Comparative genomics reveals mobile pathogenicity chromosomes in Fusarium.</title>
        <authorList>
            <person name="Ma L.-J."/>
            <person name="van der Does H.C."/>
            <person name="Borkovich K.A."/>
            <person name="Coleman J.J."/>
            <person name="Daboussi M.-J."/>
            <person name="Di Pietro A."/>
            <person name="Dufresne M."/>
            <person name="Freitag M."/>
            <person name="Grabherr M."/>
            <person name="Henrissat B."/>
            <person name="Houterman P.M."/>
            <person name="Kang S."/>
            <person name="Shim W.-B."/>
            <person name="Woloshuk C."/>
            <person name="Xie X."/>
            <person name="Xu J.-R."/>
            <person name="Antoniw J."/>
            <person name="Baker S.E."/>
            <person name="Bluhm B.H."/>
            <person name="Breakspear A."/>
            <person name="Brown D.W."/>
            <person name="Butchko R.A.E."/>
            <person name="Chapman S."/>
            <person name="Coulson R."/>
            <person name="Coutinho P.M."/>
            <person name="Danchin E.G.J."/>
            <person name="Diener A."/>
            <person name="Gale L.R."/>
            <person name="Gardiner D.M."/>
            <person name="Goff S."/>
            <person name="Hammond-Kosack K.E."/>
            <person name="Hilburn K."/>
            <person name="Hua-Van A."/>
            <person name="Jonkers W."/>
            <person name="Kazan K."/>
            <person name="Kodira C.D."/>
            <person name="Koehrsen M."/>
            <person name="Kumar L."/>
            <person name="Lee Y.-H."/>
            <person name="Li L."/>
            <person name="Manners J.M."/>
            <person name="Miranda-Saavedra D."/>
            <person name="Mukherjee M."/>
            <person name="Park G."/>
            <person name="Park J."/>
            <person name="Park S.-Y."/>
            <person name="Proctor R.H."/>
            <person name="Regev A."/>
            <person name="Ruiz-Roldan M.C."/>
            <person name="Sain D."/>
            <person name="Sakthikumar S."/>
            <person name="Sykes S."/>
            <person name="Schwartz D.C."/>
            <person name="Turgeon B.G."/>
            <person name="Wapinski I."/>
            <person name="Yoder O."/>
            <person name="Young S."/>
            <person name="Zeng Q."/>
            <person name="Zhou S."/>
            <person name="Galagan J."/>
            <person name="Cuomo C.A."/>
            <person name="Kistler H.C."/>
            <person name="Rep M."/>
        </authorList>
    </citation>
    <scope>GENOME REANNOTATION</scope>
    <source>
        <strain>ATCC MYA-4620 / CBS 123657 / FGSC 9075 / NRRL 31084 / PH-1</strain>
    </source>
</reference>
<reference key="8">
    <citation type="journal article" date="2015" name="BMC Genomics">
        <title>The completed genome sequence of the pathogenic ascomycete fungus Fusarium graminearum.</title>
        <authorList>
            <person name="King R."/>
            <person name="Urban M."/>
            <person name="Hammond-Kosack M.C.U."/>
            <person name="Hassani-Pak K."/>
            <person name="Hammond-Kosack K.E."/>
        </authorList>
    </citation>
    <scope>NUCLEOTIDE SEQUENCE [LARGE SCALE GENOMIC DNA]</scope>
    <source>
        <strain>ATCC MYA-4620 / CBS 123657 / FGSC 9075 / NRRL 31084 / PH-1</strain>
    </source>
</reference>
<feature type="chain" id="PRO_0000221586" description="Trichodiene synthase">
    <location>
        <begin position="1"/>
        <end position="375"/>
    </location>
</feature>
<feature type="sequence variant" description="In strain: NRRL 13383 and NRRL 28439.">
    <original>Q</original>
    <variation>K</variation>
    <location>
        <position position="54"/>
    </location>
</feature>
<feature type="sequence variant" description="In strain: NRRL 28336.">
    <original>A</original>
    <variation>S</variation>
    <location>
        <position position="124"/>
    </location>
</feature>
<feature type="sequence variant" description="In strain: NRRL 29169.">
    <original>E</original>
    <variation>K</variation>
    <location>
        <position position="133"/>
    </location>
</feature>
<feature type="sequence variant" description="In strain: IBT1958.">
    <original>N</original>
    <variation>D</variation>
    <location>
        <position position="137"/>
    </location>
</feature>
<feature type="sequence variant" description="In strain: NRRL 28336.">
    <original>H</original>
    <variation>N</variation>
    <location>
        <position position="206"/>
    </location>
</feature>
<feature type="sequence variant" description="In strain: NRRL 28336.">
    <original>S</original>
    <variation>T</variation>
    <location>
        <position position="212"/>
    </location>
</feature>
<feature type="sequence variant" description="In strain: NRRL 28336.">
    <original>S</original>
    <variation>A</variation>
    <location>
        <position position="278"/>
    </location>
</feature>
<feature type="sequence variant" description="In strain: IBT1958.">
    <original>Q</original>
    <variation>K</variation>
    <location>
        <position position="317"/>
    </location>
</feature>
<feature type="sequence variant" description="In strain: NRRL 28336.">
    <original>V</original>
    <variation>M</variation>
    <location>
        <position position="360"/>
    </location>
</feature>
<feature type="sequence variant" description="In strain: NRRL 13383 and NRRL 28439.">
    <original>Q</original>
    <variation>H</variation>
    <location>
        <position position="364"/>
    </location>
</feature>